<organism>
    <name type="scientific">Caldanaerobacter subterraneus subsp. tengcongensis (strain DSM 15242 / JCM 11007 / NBRC 100824 / MB4)</name>
    <name type="common">Thermoanaerobacter tengcongensis</name>
    <dbReference type="NCBI Taxonomy" id="273068"/>
    <lineage>
        <taxon>Bacteria</taxon>
        <taxon>Bacillati</taxon>
        <taxon>Bacillota</taxon>
        <taxon>Clostridia</taxon>
        <taxon>Thermoanaerobacterales</taxon>
        <taxon>Thermoanaerobacteraceae</taxon>
        <taxon>Caldanaerobacter</taxon>
    </lineage>
</organism>
<comment type="function">
    <text evidence="1">Digests double-stranded RNA. Involved in the processing of primary rRNA transcript to yield the immediate precursors to the large and small rRNAs (23S and 16S). Processes some mRNAs, and tRNAs when they are encoded in the rRNA operon. Processes pre-crRNA and tracrRNA of type II CRISPR loci if present in the organism.</text>
</comment>
<comment type="catalytic activity">
    <reaction evidence="1">
        <text>Endonucleolytic cleavage to 5'-phosphomonoester.</text>
        <dbReference type="EC" id="3.1.26.3"/>
    </reaction>
</comment>
<comment type="cofactor">
    <cofactor evidence="1">
        <name>Mg(2+)</name>
        <dbReference type="ChEBI" id="CHEBI:18420"/>
    </cofactor>
</comment>
<comment type="subunit">
    <text evidence="1">Homodimer.</text>
</comment>
<comment type="subcellular location">
    <subcellularLocation>
        <location evidence="1">Cytoplasm</location>
    </subcellularLocation>
</comment>
<comment type="similarity">
    <text evidence="1">Belongs to the ribonuclease III family.</text>
</comment>
<keyword id="KW-0963">Cytoplasm</keyword>
<keyword id="KW-0255">Endonuclease</keyword>
<keyword id="KW-0378">Hydrolase</keyword>
<keyword id="KW-0460">Magnesium</keyword>
<keyword id="KW-0479">Metal-binding</keyword>
<keyword id="KW-0507">mRNA processing</keyword>
<keyword id="KW-0540">Nuclease</keyword>
<keyword id="KW-1185">Reference proteome</keyword>
<keyword id="KW-0694">RNA-binding</keyword>
<keyword id="KW-0698">rRNA processing</keyword>
<keyword id="KW-0699">rRNA-binding</keyword>
<keyword id="KW-0819">tRNA processing</keyword>
<name>RNC_CALS4</name>
<feature type="chain" id="PRO_0000180449" description="Ribonuclease 3">
    <location>
        <begin position="1"/>
        <end position="228"/>
    </location>
</feature>
<feature type="domain" description="RNase III" evidence="1">
    <location>
        <begin position="2"/>
        <end position="130"/>
    </location>
</feature>
<feature type="domain" description="DRBM" evidence="1">
    <location>
        <begin position="157"/>
        <end position="226"/>
    </location>
</feature>
<feature type="active site" evidence="1">
    <location>
        <position position="47"/>
    </location>
</feature>
<feature type="active site" evidence="1">
    <location>
        <position position="119"/>
    </location>
</feature>
<feature type="binding site" evidence="1">
    <location>
        <position position="43"/>
    </location>
    <ligand>
        <name>Mg(2+)</name>
        <dbReference type="ChEBI" id="CHEBI:18420"/>
    </ligand>
</feature>
<feature type="binding site" evidence="1">
    <location>
        <position position="116"/>
    </location>
    <ligand>
        <name>Mg(2+)</name>
        <dbReference type="ChEBI" id="CHEBI:18420"/>
    </ligand>
</feature>
<feature type="binding site" evidence="1">
    <location>
        <position position="119"/>
    </location>
    <ligand>
        <name>Mg(2+)</name>
        <dbReference type="ChEBI" id="CHEBI:18420"/>
    </ligand>
</feature>
<gene>
    <name evidence="1" type="primary">rnc</name>
    <name type="ordered locus">TTE1469</name>
</gene>
<accession>Q8R9W3</accession>
<evidence type="ECO:0000255" key="1">
    <source>
        <dbReference type="HAMAP-Rule" id="MF_00104"/>
    </source>
</evidence>
<protein>
    <recommendedName>
        <fullName evidence="1">Ribonuclease 3</fullName>
        <ecNumber evidence="1">3.1.26.3</ecNumber>
    </recommendedName>
    <alternativeName>
        <fullName evidence="1">Ribonuclease III</fullName>
        <shortName evidence="1">RNase III</shortName>
    </alternativeName>
</protein>
<reference key="1">
    <citation type="journal article" date="2002" name="Genome Res.">
        <title>A complete sequence of the T. tengcongensis genome.</title>
        <authorList>
            <person name="Bao Q."/>
            <person name="Tian Y."/>
            <person name="Li W."/>
            <person name="Xu Z."/>
            <person name="Xuan Z."/>
            <person name="Hu S."/>
            <person name="Dong W."/>
            <person name="Yang J."/>
            <person name="Chen Y."/>
            <person name="Xue Y."/>
            <person name="Xu Y."/>
            <person name="Lai X."/>
            <person name="Huang L."/>
            <person name="Dong X."/>
            <person name="Ma Y."/>
            <person name="Ling L."/>
            <person name="Tan H."/>
            <person name="Chen R."/>
            <person name="Wang J."/>
            <person name="Yu J."/>
            <person name="Yang H."/>
        </authorList>
    </citation>
    <scope>NUCLEOTIDE SEQUENCE [LARGE SCALE GENOMIC DNA]</scope>
    <source>
        <strain>DSM 15242 / JCM 11007 / NBRC 100824 / MB4</strain>
    </source>
</reference>
<proteinExistence type="inferred from homology"/>
<sequence length="228" mass="25635">MLTYLEQKINYEFKDKTLLLEALTHSSWAHEGKNEKVSNERLEFLGDSVLSLVISEYLYKNRKDLEEGSLSKYRAEIVCEPSLARCARKIELGSFLRMGKGEEISGGRDRDSILADAMEALLAAVYLDGGLEAVRRVILDLFKEIIDEVLKGIIYRDYKTRLQEVVQSMEVGKITYELVEEIGPDHNKTFVTQVKIGDVVLGIGQGKSKKESEQAAAMEALSKLGILK</sequence>
<dbReference type="EC" id="3.1.26.3" evidence="1"/>
<dbReference type="EMBL" id="AE008691">
    <property type="protein sequence ID" value="AAM24691.1"/>
    <property type="molecule type" value="Genomic_DNA"/>
</dbReference>
<dbReference type="SMR" id="Q8R9W3"/>
<dbReference type="STRING" id="273068.TTE1469"/>
<dbReference type="KEGG" id="tte:TTE1469"/>
<dbReference type="eggNOG" id="COG0571">
    <property type="taxonomic scope" value="Bacteria"/>
</dbReference>
<dbReference type="HOGENOM" id="CLU_000907_1_3_9"/>
<dbReference type="Proteomes" id="UP000000555">
    <property type="component" value="Chromosome"/>
</dbReference>
<dbReference type="GO" id="GO:0005737">
    <property type="term" value="C:cytoplasm"/>
    <property type="evidence" value="ECO:0007669"/>
    <property type="project" value="UniProtKB-SubCell"/>
</dbReference>
<dbReference type="GO" id="GO:0003725">
    <property type="term" value="F:double-stranded RNA binding"/>
    <property type="evidence" value="ECO:0007669"/>
    <property type="project" value="TreeGrafter"/>
</dbReference>
<dbReference type="GO" id="GO:0046872">
    <property type="term" value="F:metal ion binding"/>
    <property type="evidence" value="ECO:0007669"/>
    <property type="project" value="UniProtKB-KW"/>
</dbReference>
<dbReference type="GO" id="GO:0004525">
    <property type="term" value="F:ribonuclease III activity"/>
    <property type="evidence" value="ECO:0007669"/>
    <property type="project" value="UniProtKB-UniRule"/>
</dbReference>
<dbReference type="GO" id="GO:0019843">
    <property type="term" value="F:rRNA binding"/>
    <property type="evidence" value="ECO:0007669"/>
    <property type="project" value="UniProtKB-KW"/>
</dbReference>
<dbReference type="GO" id="GO:0006397">
    <property type="term" value="P:mRNA processing"/>
    <property type="evidence" value="ECO:0007669"/>
    <property type="project" value="UniProtKB-UniRule"/>
</dbReference>
<dbReference type="GO" id="GO:0010468">
    <property type="term" value="P:regulation of gene expression"/>
    <property type="evidence" value="ECO:0007669"/>
    <property type="project" value="TreeGrafter"/>
</dbReference>
<dbReference type="GO" id="GO:0006364">
    <property type="term" value="P:rRNA processing"/>
    <property type="evidence" value="ECO:0007669"/>
    <property type="project" value="UniProtKB-UniRule"/>
</dbReference>
<dbReference type="GO" id="GO:0008033">
    <property type="term" value="P:tRNA processing"/>
    <property type="evidence" value="ECO:0007669"/>
    <property type="project" value="UniProtKB-KW"/>
</dbReference>
<dbReference type="CDD" id="cd10845">
    <property type="entry name" value="DSRM_RNAse_III_family"/>
    <property type="match status" value="1"/>
</dbReference>
<dbReference type="CDD" id="cd00593">
    <property type="entry name" value="RIBOc"/>
    <property type="match status" value="1"/>
</dbReference>
<dbReference type="FunFam" id="1.10.1520.10:FF:000001">
    <property type="entry name" value="Ribonuclease 3"/>
    <property type="match status" value="1"/>
</dbReference>
<dbReference type="FunFam" id="3.30.160.20:FF:000003">
    <property type="entry name" value="Ribonuclease 3"/>
    <property type="match status" value="1"/>
</dbReference>
<dbReference type="Gene3D" id="3.30.160.20">
    <property type="match status" value="1"/>
</dbReference>
<dbReference type="Gene3D" id="1.10.1520.10">
    <property type="entry name" value="Ribonuclease III domain"/>
    <property type="match status" value="1"/>
</dbReference>
<dbReference type="HAMAP" id="MF_00104">
    <property type="entry name" value="RNase_III"/>
    <property type="match status" value="1"/>
</dbReference>
<dbReference type="InterPro" id="IPR014720">
    <property type="entry name" value="dsRBD_dom"/>
</dbReference>
<dbReference type="InterPro" id="IPR011907">
    <property type="entry name" value="RNase_III"/>
</dbReference>
<dbReference type="InterPro" id="IPR000999">
    <property type="entry name" value="RNase_III_dom"/>
</dbReference>
<dbReference type="InterPro" id="IPR036389">
    <property type="entry name" value="RNase_III_sf"/>
</dbReference>
<dbReference type="NCBIfam" id="TIGR02191">
    <property type="entry name" value="RNaseIII"/>
    <property type="match status" value="1"/>
</dbReference>
<dbReference type="PANTHER" id="PTHR11207:SF0">
    <property type="entry name" value="RIBONUCLEASE 3"/>
    <property type="match status" value="1"/>
</dbReference>
<dbReference type="PANTHER" id="PTHR11207">
    <property type="entry name" value="RIBONUCLEASE III"/>
    <property type="match status" value="1"/>
</dbReference>
<dbReference type="Pfam" id="PF00035">
    <property type="entry name" value="dsrm"/>
    <property type="match status" value="1"/>
</dbReference>
<dbReference type="Pfam" id="PF14622">
    <property type="entry name" value="Ribonucleas_3_3"/>
    <property type="match status" value="1"/>
</dbReference>
<dbReference type="SMART" id="SM00358">
    <property type="entry name" value="DSRM"/>
    <property type="match status" value="1"/>
</dbReference>
<dbReference type="SMART" id="SM00535">
    <property type="entry name" value="RIBOc"/>
    <property type="match status" value="1"/>
</dbReference>
<dbReference type="SUPFAM" id="SSF54768">
    <property type="entry name" value="dsRNA-binding domain-like"/>
    <property type="match status" value="1"/>
</dbReference>
<dbReference type="SUPFAM" id="SSF69065">
    <property type="entry name" value="RNase III domain-like"/>
    <property type="match status" value="1"/>
</dbReference>
<dbReference type="PROSITE" id="PS50137">
    <property type="entry name" value="DS_RBD"/>
    <property type="match status" value="1"/>
</dbReference>
<dbReference type="PROSITE" id="PS00517">
    <property type="entry name" value="RNASE_3_1"/>
    <property type="match status" value="1"/>
</dbReference>
<dbReference type="PROSITE" id="PS50142">
    <property type="entry name" value="RNASE_3_2"/>
    <property type="match status" value="1"/>
</dbReference>